<accession>A8GTK6</accession>
<comment type="function">
    <text evidence="1">This protein binds to 23S rRNA in the presence of protein L20.</text>
</comment>
<comment type="subunit">
    <text evidence="1">Part of the 50S ribosomal subunit. Contacts protein L20.</text>
</comment>
<comment type="similarity">
    <text evidence="1">Belongs to the bacterial ribosomal protein bL21 family.</text>
</comment>
<dbReference type="EMBL" id="CP000848">
    <property type="protein sequence ID" value="ABV76731.1"/>
    <property type="molecule type" value="Genomic_DNA"/>
</dbReference>
<dbReference type="RefSeq" id="WP_004997480.1">
    <property type="nucleotide sequence ID" value="NZ_CP121767.1"/>
</dbReference>
<dbReference type="SMR" id="A8GTK6"/>
<dbReference type="GeneID" id="95361581"/>
<dbReference type="KEGG" id="rri:A1G_06390"/>
<dbReference type="HOGENOM" id="CLU_061463_3_2_5"/>
<dbReference type="Proteomes" id="UP000006832">
    <property type="component" value="Chromosome"/>
</dbReference>
<dbReference type="GO" id="GO:0005737">
    <property type="term" value="C:cytoplasm"/>
    <property type="evidence" value="ECO:0007669"/>
    <property type="project" value="UniProtKB-ARBA"/>
</dbReference>
<dbReference type="GO" id="GO:1990904">
    <property type="term" value="C:ribonucleoprotein complex"/>
    <property type="evidence" value="ECO:0007669"/>
    <property type="project" value="UniProtKB-KW"/>
</dbReference>
<dbReference type="GO" id="GO:0005840">
    <property type="term" value="C:ribosome"/>
    <property type="evidence" value="ECO:0007669"/>
    <property type="project" value="UniProtKB-KW"/>
</dbReference>
<dbReference type="GO" id="GO:0019843">
    <property type="term" value="F:rRNA binding"/>
    <property type="evidence" value="ECO:0007669"/>
    <property type="project" value="UniProtKB-UniRule"/>
</dbReference>
<dbReference type="GO" id="GO:0003735">
    <property type="term" value="F:structural constituent of ribosome"/>
    <property type="evidence" value="ECO:0007669"/>
    <property type="project" value="InterPro"/>
</dbReference>
<dbReference type="GO" id="GO:0006412">
    <property type="term" value="P:translation"/>
    <property type="evidence" value="ECO:0007669"/>
    <property type="project" value="UniProtKB-UniRule"/>
</dbReference>
<dbReference type="HAMAP" id="MF_01363">
    <property type="entry name" value="Ribosomal_bL21"/>
    <property type="match status" value="1"/>
</dbReference>
<dbReference type="InterPro" id="IPR028909">
    <property type="entry name" value="bL21-like"/>
</dbReference>
<dbReference type="InterPro" id="IPR036164">
    <property type="entry name" value="bL21-like_sf"/>
</dbReference>
<dbReference type="InterPro" id="IPR001787">
    <property type="entry name" value="Ribosomal_bL21"/>
</dbReference>
<dbReference type="InterPro" id="IPR018258">
    <property type="entry name" value="Ribosomal_bL21_CS"/>
</dbReference>
<dbReference type="NCBIfam" id="TIGR00061">
    <property type="entry name" value="L21"/>
    <property type="match status" value="1"/>
</dbReference>
<dbReference type="PANTHER" id="PTHR21349">
    <property type="entry name" value="50S RIBOSOMAL PROTEIN L21"/>
    <property type="match status" value="1"/>
</dbReference>
<dbReference type="PANTHER" id="PTHR21349:SF0">
    <property type="entry name" value="LARGE RIBOSOMAL SUBUNIT PROTEIN BL21M"/>
    <property type="match status" value="1"/>
</dbReference>
<dbReference type="Pfam" id="PF00829">
    <property type="entry name" value="Ribosomal_L21p"/>
    <property type="match status" value="1"/>
</dbReference>
<dbReference type="SUPFAM" id="SSF141091">
    <property type="entry name" value="L21p-like"/>
    <property type="match status" value="1"/>
</dbReference>
<dbReference type="PROSITE" id="PS01169">
    <property type="entry name" value="RIBOSOMAL_L21"/>
    <property type="match status" value="1"/>
</dbReference>
<proteinExistence type="inferred from homology"/>
<evidence type="ECO:0000255" key="1">
    <source>
        <dbReference type="HAMAP-Rule" id="MF_01363"/>
    </source>
</evidence>
<evidence type="ECO:0000305" key="2"/>
<feature type="chain" id="PRO_1000067888" description="Large ribosomal subunit protein bL21">
    <location>
        <begin position="1"/>
        <end position="105"/>
    </location>
</feature>
<protein>
    <recommendedName>
        <fullName evidence="1">Large ribosomal subunit protein bL21</fullName>
    </recommendedName>
    <alternativeName>
        <fullName evidence="2">50S ribosomal protein L21</fullName>
    </alternativeName>
</protein>
<gene>
    <name evidence="1" type="primary">rplU</name>
    <name type="ordered locus">A1G_06390</name>
</gene>
<keyword id="KW-0687">Ribonucleoprotein</keyword>
<keyword id="KW-0689">Ribosomal protein</keyword>
<keyword id="KW-0694">RNA-binding</keyword>
<keyword id="KW-0699">rRNA-binding</keyword>
<sequence>MFAVIKAGGKQYKVDRNSIIKVEKIDGELGSKIQFDQILMIGEYSKPSFIGTPIVKGAVVTAEITNQLKDNKIIVFKKKRRKNYRRKAGHRQELTELKILDITKQ</sequence>
<reference key="1">
    <citation type="submission" date="2007-09" db="EMBL/GenBank/DDBJ databases">
        <title>Complete genome sequence of Rickettsia rickettsii.</title>
        <authorList>
            <person name="Madan A."/>
            <person name="Fahey J."/>
            <person name="Helton E."/>
            <person name="Ketteman M."/>
            <person name="Madan A."/>
            <person name="Rodrigues S."/>
            <person name="Sanchez A."/>
            <person name="Dasch G."/>
            <person name="Eremeeva M."/>
        </authorList>
    </citation>
    <scope>NUCLEOTIDE SEQUENCE [LARGE SCALE GENOMIC DNA]</scope>
    <source>
        <strain>Sheila Smith</strain>
    </source>
</reference>
<name>RL21_RICRS</name>
<organism>
    <name type="scientific">Rickettsia rickettsii (strain Sheila Smith)</name>
    <dbReference type="NCBI Taxonomy" id="392021"/>
    <lineage>
        <taxon>Bacteria</taxon>
        <taxon>Pseudomonadati</taxon>
        <taxon>Pseudomonadota</taxon>
        <taxon>Alphaproteobacteria</taxon>
        <taxon>Rickettsiales</taxon>
        <taxon>Rickettsiaceae</taxon>
        <taxon>Rickettsieae</taxon>
        <taxon>Rickettsia</taxon>
        <taxon>spotted fever group</taxon>
    </lineage>
</organism>